<dbReference type="EC" id="2.7.7.23" evidence="1"/>
<dbReference type="EC" id="2.3.1.157" evidence="1"/>
<dbReference type="EMBL" id="BX571662">
    <property type="protein sequence ID" value="CAE11088.1"/>
    <property type="molecule type" value="Genomic_DNA"/>
</dbReference>
<dbReference type="RefSeq" id="WP_011139870.1">
    <property type="nucleotide sequence ID" value="NC_005090.1"/>
</dbReference>
<dbReference type="SMR" id="Q7M7T9"/>
<dbReference type="STRING" id="273121.WS2089"/>
<dbReference type="KEGG" id="wsu:WS2089"/>
<dbReference type="eggNOG" id="COG1207">
    <property type="taxonomic scope" value="Bacteria"/>
</dbReference>
<dbReference type="HOGENOM" id="CLU_029499_15_2_7"/>
<dbReference type="UniPathway" id="UPA00113">
    <property type="reaction ID" value="UER00532"/>
</dbReference>
<dbReference type="UniPathway" id="UPA00113">
    <property type="reaction ID" value="UER00533"/>
</dbReference>
<dbReference type="UniPathway" id="UPA00973"/>
<dbReference type="Proteomes" id="UP000000422">
    <property type="component" value="Chromosome"/>
</dbReference>
<dbReference type="GO" id="GO:0005737">
    <property type="term" value="C:cytoplasm"/>
    <property type="evidence" value="ECO:0007669"/>
    <property type="project" value="UniProtKB-SubCell"/>
</dbReference>
<dbReference type="GO" id="GO:0016020">
    <property type="term" value="C:membrane"/>
    <property type="evidence" value="ECO:0007669"/>
    <property type="project" value="GOC"/>
</dbReference>
<dbReference type="GO" id="GO:0019134">
    <property type="term" value="F:glucosamine-1-phosphate N-acetyltransferase activity"/>
    <property type="evidence" value="ECO:0007669"/>
    <property type="project" value="UniProtKB-UniRule"/>
</dbReference>
<dbReference type="GO" id="GO:0000287">
    <property type="term" value="F:magnesium ion binding"/>
    <property type="evidence" value="ECO:0007669"/>
    <property type="project" value="UniProtKB-UniRule"/>
</dbReference>
<dbReference type="GO" id="GO:0003977">
    <property type="term" value="F:UDP-N-acetylglucosamine diphosphorylase activity"/>
    <property type="evidence" value="ECO:0007669"/>
    <property type="project" value="UniProtKB-UniRule"/>
</dbReference>
<dbReference type="GO" id="GO:0000902">
    <property type="term" value="P:cell morphogenesis"/>
    <property type="evidence" value="ECO:0007669"/>
    <property type="project" value="UniProtKB-UniRule"/>
</dbReference>
<dbReference type="GO" id="GO:0071555">
    <property type="term" value="P:cell wall organization"/>
    <property type="evidence" value="ECO:0007669"/>
    <property type="project" value="UniProtKB-KW"/>
</dbReference>
<dbReference type="GO" id="GO:0009245">
    <property type="term" value="P:lipid A biosynthetic process"/>
    <property type="evidence" value="ECO:0007669"/>
    <property type="project" value="UniProtKB-UniRule"/>
</dbReference>
<dbReference type="GO" id="GO:0009252">
    <property type="term" value="P:peptidoglycan biosynthetic process"/>
    <property type="evidence" value="ECO:0007669"/>
    <property type="project" value="UniProtKB-UniRule"/>
</dbReference>
<dbReference type="GO" id="GO:0008360">
    <property type="term" value="P:regulation of cell shape"/>
    <property type="evidence" value="ECO:0007669"/>
    <property type="project" value="UniProtKB-KW"/>
</dbReference>
<dbReference type="GO" id="GO:0006048">
    <property type="term" value="P:UDP-N-acetylglucosamine biosynthetic process"/>
    <property type="evidence" value="ECO:0007669"/>
    <property type="project" value="UniProtKB-UniPathway"/>
</dbReference>
<dbReference type="CDD" id="cd02540">
    <property type="entry name" value="GT2_GlmU_N_bac"/>
    <property type="match status" value="1"/>
</dbReference>
<dbReference type="CDD" id="cd03353">
    <property type="entry name" value="LbH_GlmU_C"/>
    <property type="match status" value="1"/>
</dbReference>
<dbReference type="Gene3D" id="2.160.10.10">
    <property type="entry name" value="Hexapeptide repeat proteins"/>
    <property type="match status" value="1"/>
</dbReference>
<dbReference type="Gene3D" id="3.90.550.10">
    <property type="entry name" value="Spore Coat Polysaccharide Biosynthesis Protein SpsA, Chain A"/>
    <property type="match status" value="1"/>
</dbReference>
<dbReference type="HAMAP" id="MF_01631">
    <property type="entry name" value="GlmU"/>
    <property type="match status" value="1"/>
</dbReference>
<dbReference type="InterPro" id="IPR005882">
    <property type="entry name" value="Bifunctional_GlmU"/>
</dbReference>
<dbReference type="InterPro" id="IPR050065">
    <property type="entry name" value="GlmU-like"/>
</dbReference>
<dbReference type="InterPro" id="IPR038009">
    <property type="entry name" value="GlmU_C_LbH"/>
</dbReference>
<dbReference type="InterPro" id="IPR001451">
    <property type="entry name" value="Hexapep"/>
</dbReference>
<dbReference type="InterPro" id="IPR018357">
    <property type="entry name" value="Hexapep_transf_CS"/>
</dbReference>
<dbReference type="InterPro" id="IPR025877">
    <property type="entry name" value="MobA-like_NTP_Trfase"/>
</dbReference>
<dbReference type="InterPro" id="IPR029044">
    <property type="entry name" value="Nucleotide-diphossugar_trans"/>
</dbReference>
<dbReference type="InterPro" id="IPR011004">
    <property type="entry name" value="Trimer_LpxA-like_sf"/>
</dbReference>
<dbReference type="NCBIfam" id="TIGR01173">
    <property type="entry name" value="glmU"/>
    <property type="match status" value="1"/>
</dbReference>
<dbReference type="NCBIfam" id="NF010939">
    <property type="entry name" value="PRK14359.1"/>
    <property type="match status" value="1"/>
</dbReference>
<dbReference type="PANTHER" id="PTHR43584:SF3">
    <property type="entry name" value="BIFUNCTIONAL PROTEIN GLMU"/>
    <property type="match status" value="1"/>
</dbReference>
<dbReference type="PANTHER" id="PTHR43584">
    <property type="entry name" value="NUCLEOTIDYL TRANSFERASE"/>
    <property type="match status" value="1"/>
</dbReference>
<dbReference type="Pfam" id="PF00132">
    <property type="entry name" value="Hexapep"/>
    <property type="match status" value="1"/>
</dbReference>
<dbReference type="Pfam" id="PF12804">
    <property type="entry name" value="NTP_transf_3"/>
    <property type="match status" value="1"/>
</dbReference>
<dbReference type="SUPFAM" id="SSF53448">
    <property type="entry name" value="Nucleotide-diphospho-sugar transferases"/>
    <property type="match status" value="1"/>
</dbReference>
<dbReference type="SUPFAM" id="SSF51161">
    <property type="entry name" value="Trimeric LpxA-like enzymes"/>
    <property type="match status" value="1"/>
</dbReference>
<dbReference type="PROSITE" id="PS00101">
    <property type="entry name" value="HEXAPEP_TRANSFERASES"/>
    <property type="match status" value="1"/>
</dbReference>
<evidence type="ECO:0000255" key="1">
    <source>
        <dbReference type="HAMAP-Rule" id="MF_01631"/>
    </source>
</evidence>
<reference key="1">
    <citation type="journal article" date="2003" name="Proc. Natl. Acad. Sci. U.S.A.">
        <title>Complete genome sequence and analysis of Wolinella succinogenes.</title>
        <authorList>
            <person name="Baar C."/>
            <person name="Eppinger M."/>
            <person name="Raddatz G."/>
            <person name="Simon J."/>
            <person name="Lanz C."/>
            <person name="Klimmek O."/>
            <person name="Nandakumar R."/>
            <person name="Gross R."/>
            <person name="Rosinus A."/>
            <person name="Keller H."/>
            <person name="Jagtap P."/>
            <person name="Linke B."/>
            <person name="Meyer F."/>
            <person name="Lederer H."/>
            <person name="Schuster S.C."/>
        </authorList>
    </citation>
    <scope>NUCLEOTIDE SEQUENCE [LARGE SCALE GENOMIC DNA]</scope>
    <source>
        <strain>ATCC 29543 / DSM 1740 / CCUG 13145 / JCM 31913 / LMG 7466 / NCTC 11488 / FDC 602W</strain>
    </source>
</reference>
<sequence>MNLSIVILAAGAGTRMKSKTPKVLHTLCGREMLYYVIKEAKKLSDDVSVVLFHESEMVKKSIEKYFSDIRYVIQDHVNYPGTGGALMGIEPKYQKILVLNGDMPLVEAEELKQFLRAGSDFVMSVLDLEDGSGYGRVVIHGGSVERIVEEKDATGEEKSLGTVNAGVYLFDRALLACYLPRLKNDNAQKEFYLTDVVEMARKDRLIVAPLFVKEENFKGVNSKADLAEAEAIMTGRIRRRWMREGVRMRLPETIYIDEGVKFVGECFIENGVSITGDSYIEESHIKAHSVIEESRVIRSDVGPMAHLRPQCEVTETHIGNFVEVKKSKLTGVKAGHLSYLGDCEVDEGSNIGAGVITCNYDGKKKHLTKIGKNVFVGSDSQLVAPVSIEDDSIIGAGSTITKNVKSGELALSRAKQENIAGFFARYFSSSK</sequence>
<gene>
    <name evidence="1" type="primary">glmU</name>
    <name type="ordered locus">WS2089</name>
</gene>
<protein>
    <recommendedName>
        <fullName evidence="1">Bifunctional protein GlmU</fullName>
    </recommendedName>
    <domain>
        <recommendedName>
            <fullName evidence="1">UDP-N-acetylglucosamine pyrophosphorylase</fullName>
            <ecNumber evidence="1">2.7.7.23</ecNumber>
        </recommendedName>
        <alternativeName>
            <fullName evidence="1">N-acetylglucosamine-1-phosphate uridyltransferase</fullName>
        </alternativeName>
    </domain>
    <domain>
        <recommendedName>
            <fullName evidence="1">Glucosamine-1-phosphate N-acetyltransferase</fullName>
            <ecNumber evidence="1">2.3.1.157</ecNumber>
        </recommendedName>
    </domain>
</protein>
<keyword id="KW-0012">Acyltransferase</keyword>
<keyword id="KW-0133">Cell shape</keyword>
<keyword id="KW-0961">Cell wall biogenesis/degradation</keyword>
<keyword id="KW-0963">Cytoplasm</keyword>
<keyword id="KW-0460">Magnesium</keyword>
<keyword id="KW-0479">Metal-binding</keyword>
<keyword id="KW-0511">Multifunctional enzyme</keyword>
<keyword id="KW-0548">Nucleotidyltransferase</keyword>
<keyword id="KW-0573">Peptidoglycan synthesis</keyword>
<keyword id="KW-1185">Reference proteome</keyword>
<keyword id="KW-0677">Repeat</keyword>
<keyword id="KW-0808">Transferase</keyword>
<organism>
    <name type="scientific">Wolinella succinogenes (strain ATCC 29543 / DSM 1740 / CCUG 13145 / JCM 31913 / LMG 7466 / NCTC 11488 / FDC 602W)</name>
    <name type="common">Vibrio succinogenes</name>
    <dbReference type="NCBI Taxonomy" id="273121"/>
    <lineage>
        <taxon>Bacteria</taxon>
        <taxon>Pseudomonadati</taxon>
        <taxon>Campylobacterota</taxon>
        <taxon>Epsilonproteobacteria</taxon>
        <taxon>Campylobacterales</taxon>
        <taxon>Helicobacteraceae</taxon>
        <taxon>Wolinella</taxon>
    </lineage>
</organism>
<accession>Q7M7T9</accession>
<proteinExistence type="inferred from homology"/>
<comment type="function">
    <text evidence="1">Catalyzes the last two sequential reactions in the de novo biosynthetic pathway for UDP-N-acetylglucosamine (UDP-GlcNAc). The C-terminal domain catalyzes the transfer of acetyl group from acetyl coenzyme A to glucosamine-1-phosphate (GlcN-1-P) to produce N-acetylglucosamine-1-phosphate (GlcNAc-1-P), which is converted into UDP-GlcNAc by the transfer of uridine 5-monophosphate (from uridine 5-triphosphate), a reaction catalyzed by the N-terminal domain.</text>
</comment>
<comment type="catalytic activity">
    <reaction evidence="1">
        <text>alpha-D-glucosamine 1-phosphate + acetyl-CoA = N-acetyl-alpha-D-glucosamine 1-phosphate + CoA + H(+)</text>
        <dbReference type="Rhea" id="RHEA:13725"/>
        <dbReference type="ChEBI" id="CHEBI:15378"/>
        <dbReference type="ChEBI" id="CHEBI:57287"/>
        <dbReference type="ChEBI" id="CHEBI:57288"/>
        <dbReference type="ChEBI" id="CHEBI:57776"/>
        <dbReference type="ChEBI" id="CHEBI:58516"/>
        <dbReference type="EC" id="2.3.1.157"/>
    </reaction>
</comment>
<comment type="catalytic activity">
    <reaction evidence="1">
        <text>N-acetyl-alpha-D-glucosamine 1-phosphate + UTP + H(+) = UDP-N-acetyl-alpha-D-glucosamine + diphosphate</text>
        <dbReference type="Rhea" id="RHEA:13509"/>
        <dbReference type="ChEBI" id="CHEBI:15378"/>
        <dbReference type="ChEBI" id="CHEBI:33019"/>
        <dbReference type="ChEBI" id="CHEBI:46398"/>
        <dbReference type="ChEBI" id="CHEBI:57705"/>
        <dbReference type="ChEBI" id="CHEBI:57776"/>
        <dbReference type="EC" id="2.7.7.23"/>
    </reaction>
</comment>
<comment type="cofactor">
    <cofactor evidence="1">
        <name>Mg(2+)</name>
        <dbReference type="ChEBI" id="CHEBI:18420"/>
    </cofactor>
    <text evidence="1">Binds 1 Mg(2+) ion per subunit.</text>
</comment>
<comment type="pathway">
    <text evidence="1">Nucleotide-sugar biosynthesis; UDP-N-acetyl-alpha-D-glucosamine biosynthesis; N-acetyl-alpha-D-glucosamine 1-phosphate from alpha-D-glucosamine 6-phosphate (route II): step 2/2.</text>
</comment>
<comment type="pathway">
    <text evidence="1">Nucleotide-sugar biosynthesis; UDP-N-acetyl-alpha-D-glucosamine biosynthesis; UDP-N-acetyl-alpha-D-glucosamine from N-acetyl-alpha-D-glucosamine 1-phosphate: step 1/1.</text>
</comment>
<comment type="pathway">
    <text evidence="1">Bacterial outer membrane biogenesis; LPS lipid A biosynthesis.</text>
</comment>
<comment type="subunit">
    <text evidence="1">Homotrimer.</text>
</comment>
<comment type="subcellular location">
    <subcellularLocation>
        <location evidence="1">Cytoplasm</location>
    </subcellularLocation>
</comment>
<comment type="similarity">
    <text evidence="1">In the N-terminal section; belongs to the N-acetylglucosamine-1-phosphate uridyltransferase family.</text>
</comment>
<comment type="similarity">
    <text evidence="1">In the C-terminal section; belongs to the transferase hexapeptide repeat family.</text>
</comment>
<name>GLMU_WOLSU</name>
<feature type="chain" id="PRO_0000233880" description="Bifunctional protein GlmU">
    <location>
        <begin position="1"/>
        <end position="431"/>
    </location>
</feature>
<feature type="region of interest" description="Pyrophosphorylase" evidence="1">
    <location>
        <begin position="1"/>
        <end position="223"/>
    </location>
</feature>
<feature type="region of interest" description="Linker" evidence="1">
    <location>
        <begin position="224"/>
        <end position="244"/>
    </location>
</feature>
<feature type="region of interest" description="N-acetyltransferase" evidence="1">
    <location>
        <begin position="245"/>
        <end position="431"/>
    </location>
</feature>
<feature type="active site" description="Proton acceptor" evidence="1">
    <location>
        <position position="336"/>
    </location>
</feature>
<feature type="binding site" evidence="1">
    <location>
        <begin position="8"/>
        <end position="11"/>
    </location>
    <ligand>
        <name>UDP-N-acetyl-alpha-D-glucosamine</name>
        <dbReference type="ChEBI" id="CHEBI:57705"/>
    </ligand>
</feature>
<feature type="binding site" evidence="1">
    <location>
        <position position="22"/>
    </location>
    <ligand>
        <name>UDP-N-acetyl-alpha-D-glucosamine</name>
        <dbReference type="ChEBI" id="CHEBI:57705"/>
    </ligand>
</feature>
<feature type="binding site" evidence="1">
    <location>
        <position position="74"/>
    </location>
    <ligand>
        <name>UDP-N-acetyl-alpha-D-glucosamine</name>
        <dbReference type="ChEBI" id="CHEBI:57705"/>
    </ligand>
</feature>
<feature type="binding site" evidence="1">
    <location>
        <begin position="81"/>
        <end position="82"/>
    </location>
    <ligand>
        <name>UDP-N-acetyl-alpha-D-glucosamine</name>
        <dbReference type="ChEBI" id="CHEBI:57705"/>
    </ligand>
</feature>
<feature type="binding site" evidence="1">
    <location>
        <position position="102"/>
    </location>
    <ligand>
        <name>Mg(2+)</name>
        <dbReference type="ChEBI" id="CHEBI:18420"/>
    </ligand>
</feature>
<feature type="binding site" evidence="1">
    <location>
        <position position="135"/>
    </location>
    <ligand>
        <name>UDP-N-acetyl-alpha-D-glucosamine</name>
        <dbReference type="ChEBI" id="CHEBI:57705"/>
    </ligand>
</feature>
<feature type="binding site" evidence="1">
    <location>
        <position position="149"/>
    </location>
    <ligand>
        <name>UDP-N-acetyl-alpha-D-glucosamine</name>
        <dbReference type="ChEBI" id="CHEBI:57705"/>
    </ligand>
</feature>
<feature type="binding site" evidence="1">
    <location>
        <position position="164"/>
    </location>
    <ligand>
        <name>UDP-N-acetyl-alpha-D-glucosamine</name>
        <dbReference type="ChEBI" id="CHEBI:57705"/>
    </ligand>
</feature>
<feature type="binding site" evidence="1">
    <location>
        <position position="221"/>
    </location>
    <ligand>
        <name>Mg(2+)</name>
        <dbReference type="ChEBI" id="CHEBI:18420"/>
    </ligand>
</feature>
<feature type="binding site" evidence="1">
    <location>
        <position position="221"/>
    </location>
    <ligand>
        <name>UDP-N-acetyl-alpha-D-glucosamine</name>
        <dbReference type="ChEBI" id="CHEBI:57705"/>
    </ligand>
</feature>
<feature type="binding site" evidence="1">
    <location>
        <position position="308"/>
    </location>
    <ligand>
        <name>UDP-N-acetyl-alpha-D-glucosamine</name>
        <dbReference type="ChEBI" id="CHEBI:57705"/>
    </ligand>
</feature>
<feature type="binding site" evidence="1">
    <location>
        <position position="325"/>
    </location>
    <ligand>
        <name>UDP-N-acetyl-alpha-D-glucosamine</name>
        <dbReference type="ChEBI" id="CHEBI:57705"/>
    </ligand>
</feature>
<feature type="binding site" evidence="1">
    <location>
        <position position="339"/>
    </location>
    <ligand>
        <name>UDP-N-acetyl-alpha-D-glucosamine</name>
        <dbReference type="ChEBI" id="CHEBI:57705"/>
    </ligand>
</feature>
<feature type="binding site" evidence="1">
    <location>
        <position position="350"/>
    </location>
    <ligand>
        <name>UDP-N-acetyl-alpha-D-glucosamine</name>
        <dbReference type="ChEBI" id="CHEBI:57705"/>
    </ligand>
</feature>
<feature type="binding site" evidence="1">
    <location>
        <position position="353"/>
    </location>
    <ligand>
        <name>acetyl-CoA</name>
        <dbReference type="ChEBI" id="CHEBI:57288"/>
    </ligand>
</feature>
<feature type="binding site" evidence="1">
    <location>
        <begin position="359"/>
        <end position="360"/>
    </location>
    <ligand>
        <name>acetyl-CoA</name>
        <dbReference type="ChEBI" id="CHEBI:57288"/>
    </ligand>
</feature>
<feature type="binding site" evidence="1">
    <location>
        <position position="378"/>
    </location>
    <ligand>
        <name>acetyl-CoA</name>
        <dbReference type="ChEBI" id="CHEBI:57288"/>
    </ligand>
</feature>
<feature type="binding site" evidence="1">
    <location>
        <position position="396"/>
    </location>
    <ligand>
        <name>acetyl-CoA</name>
        <dbReference type="ChEBI" id="CHEBI:57288"/>
    </ligand>
</feature>
<feature type="binding site" evidence="1">
    <location>
        <position position="413"/>
    </location>
    <ligand>
        <name>acetyl-CoA</name>
        <dbReference type="ChEBI" id="CHEBI:57288"/>
    </ligand>
</feature>